<evidence type="ECO:0000250" key="1"/>
<evidence type="ECO:0000255" key="2">
    <source>
        <dbReference type="PROSITE-ProRule" id="PRU00448"/>
    </source>
</evidence>
<evidence type="ECO:0000305" key="3"/>
<protein>
    <recommendedName>
        <fullName>Troponin C, isoform 2A</fullName>
    </recommendedName>
</protein>
<name>TNNCA_HOMAM</name>
<accession>P29290</accession>
<comment type="function">
    <text>Troponin is the central regulatory protein of striated muscle contraction. Tn consists of three components: Tn-I which is the inhibitor of actomyosin ATPase, Tn-T which contains the binding site for tropomyosin and Tn-C. The binding of calcium to Tn-C abolishes the inhibitory action of Tn on actin filaments.</text>
</comment>
<comment type="miscellaneous">
    <text>There are three different troponin C in lobster.</text>
</comment>
<comment type="miscellaneous">
    <text>This protein binds two calcium ions.</text>
</comment>
<comment type="similarity">
    <text evidence="3">Belongs to the troponin C family.</text>
</comment>
<organism>
    <name type="scientific">Homarus americanus</name>
    <name type="common">American lobster</name>
    <dbReference type="NCBI Taxonomy" id="6706"/>
    <lineage>
        <taxon>Eukaryota</taxon>
        <taxon>Metazoa</taxon>
        <taxon>Ecdysozoa</taxon>
        <taxon>Arthropoda</taxon>
        <taxon>Crustacea</taxon>
        <taxon>Multicrustacea</taxon>
        <taxon>Malacostraca</taxon>
        <taxon>Eumalacostraca</taxon>
        <taxon>Eucarida</taxon>
        <taxon>Decapoda</taxon>
        <taxon>Pleocyemata</taxon>
        <taxon>Astacidea</taxon>
        <taxon>Nephropoidea</taxon>
        <taxon>Nephropidae</taxon>
        <taxon>Homarus</taxon>
    </lineage>
</organism>
<dbReference type="PIR" id="S18434">
    <property type="entry name" value="S18434"/>
</dbReference>
<dbReference type="SMR" id="P29290"/>
<dbReference type="OrthoDB" id="26525at2759"/>
<dbReference type="GO" id="GO:0016460">
    <property type="term" value="C:myosin II complex"/>
    <property type="evidence" value="ECO:0007669"/>
    <property type="project" value="TreeGrafter"/>
</dbReference>
<dbReference type="GO" id="GO:0005509">
    <property type="term" value="F:calcium ion binding"/>
    <property type="evidence" value="ECO:0007669"/>
    <property type="project" value="InterPro"/>
</dbReference>
<dbReference type="CDD" id="cd00051">
    <property type="entry name" value="EFh"/>
    <property type="match status" value="1"/>
</dbReference>
<dbReference type="FunFam" id="1.10.238.10:FF:000103">
    <property type="entry name" value="Troponin C Ib"/>
    <property type="match status" value="1"/>
</dbReference>
<dbReference type="Gene3D" id="1.10.238.10">
    <property type="entry name" value="EF-hand"/>
    <property type="match status" value="2"/>
</dbReference>
<dbReference type="InterPro" id="IPR050230">
    <property type="entry name" value="CALM/Myosin/TropC-like"/>
</dbReference>
<dbReference type="InterPro" id="IPR011992">
    <property type="entry name" value="EF-hand-dom_pair"/>
</dbReference>
<dbReference type="InterPro" id="IPR018247">
    <property type="entry name" value="EF_Hand_1_Ca_BS"/>
</dbReference>
<dbReference type="InterPro" id="IPR002048">
    <property type="entry name" value="EF_hand_dom"/>
</dbReference>
<dbReference type="PANTHER" id="PTHR23048">
    <property type="entry name" value="MYOSIN LIGHT CHAIN 1, 3"/>
    <property type="match status" value="1"/>
</dbReference>
<dbReference type="PANTHER" id="PTHR23048:SF46">
    <property type="entry name" value="TROPONIN C-LIKE ISOFORM X1"/>
    <property type="match status" value="1"/>
</dbReference>
<dbReference type="Pfam" id="PF13499">
    <property type="entry name" value="EF-hand_7"/>
    <property type="match status" value="2"/>
</dbReference>
<dbReference type="SMART" id="SM00054">
    <property type="entry name" value="EFh"/>
    <property type="match status" value="4"/>
</dbReference>
<dbReference type="SUPFAM" id="SSF47473">
    <property type="entry name" value="EF-hand"/>
    <property type="match status" value="1"/>
</dbReference>
<dbReference type="PROSITE" id="PS00018">
    <property type="entry name" value="EF_HAND_1"/>
    <property type="match status" value="2"/>
</dbReference>
<dbReference type="PROSITE" id="PS50222">
    <property type="entry name" value="EF_HAND_2"/>
    <property type="match status" value="4"/>
</dbReference>
<sequence>MDSLDEEQIGALQKAFDSFDTDSKGFITPETVGVILRMMGVKISEKNLQEVIAETDEDGSGELEFEEFVELAAKFLIEEDEEALKTELREAFRVYDKEGNGYITTDVLKEILRELDNRLTEEDLDSIIEEVDEDGSGTLDFNEFMEMMNG</sequence>
<keyword id="KW-0007">Acetylation</keyword>
<keyword id="KW-0106">Calcium</keyword>
<keyword id="KW-0903">Direct protein sequencing</keyword>
<keyword id="KW-0479">Metal-binding</keyword>
<keyword id="KW-0514">Muscle protein</keyword>
<keyword id="KW-0677">Repeat</keyword>
<proteinExistence type="evidence at protein level"/>
<reference key="1">
    <citation type="journal article" date="1991" name="Arch. Biochem. Biophys.">
        <title>Lobster troponin C: amino acid sequences of three isoforms.</title>
        <authorList>
            <person name="Garone L."/>
            <person name="Theibert J.L."/>
            <person name="Miegel A."/>
            <person name="Maeda Y."/>
            <person name="Murphy C."/>
            <person name="Collins J.H."/>
        </authorList>
    </citation>
    <scope>PROTEIN SEQUENCE</scope>
    <source>
        <tissue>Abdominal flexor muscle</tissue>
    </source>
</reference>
<feature type="chain" id="PRO_0000073691" description="Troponin C, isoform 2A">
    <location>
        <begin position="1"/>
        <end position="150"/>
    </location>
</feature>
<feature type="domain" description="EF-hand 1" evidence="2">
    <location>
        <begin position="7"/>
        <end position="42"/>
    </location>
</feature>
<feature type="domain" description="EF-hand 2" evidence="2">
    <location>
        <begin position="43"/>
        <end position="78"/>
    </location>
</feature>
<feature type="domain" description="EF-hand 3" evidence="2">
    <location>
        <begin position="83"/>
        <end position="118"/>
    </location>
</feature>
<feature type="domain" description="EF-hand 4" evidence="2">
    <location>
        <begin position="119"/>
        <end position="150"/>
    </location>
</feature>
<feature type="binding site" evidence="2">
    <location>
        <position position="56"/>
    </location>
    <ligand>
        <name>Ca(2+)</name>
        <dbReference type="ChEBI" id="CHEBI:29108"/>
        <label>1</label>
    </ligand>
</feature>
<feature type="binding site" evidence="2">
    <location>
        <position position="58"/>
    </location>
    <ligand>
        <name>Ca(2+)</name>
        <dbReference type="ChEBI" id="CHEBI:29108"/>
        <label>1</label>
    </ligand>
</feature>
<feature type="binding site" evidence="2">
    <location>
        <position position="60"/>
    </location>
    <ligand>
        <name>Ca(2+)</name>
        <dbReference type="ChEBI" id="CHEBI:29108"/>
        <label>1</label>
    </ligand>
</feature>
<feature type="binding site" evidence="2">
    <location>
        <position position="62"/>
    </location>
    <ligand>
        <name>Ca(2+)</name>
        <dbReference type="ChEBI" id="CHEBI:29108"/>
        <label>1</label>
    </ligand>
</feature>
<feature type="binding site" evidence="2">
    <location>
        <position position="67"/>
    </location>
    <ligand>
        <name>Ca(2+)</name>
        <dbReference type="ChEBI" id="CHEBI:29108"/>
        <label>1</label>
    </ligand>
</feature>
<feature type="binding site" evidence="2">
    <location>
        <position position="132"/>
    </location>
    <ligand>
        <name>Ca(2+)</name>
        <dbReference type="ChEBI" id="CHEBI:29108"/>
        <label>2</label>
    </ligand>
</feature>
<feature type="binding site" evidence="2">
    <location>
        <position position="134"/>
    </location>
    <ligand>
        <name>Ca(2+)</name>
        <dbReference type="ChEBI" id="CHEBI:29108"/>
        <label>2</label>
    </ligand>
</feature>
<feature type="binding site" evidence="2">
    <location>
        <position position="136"/>
    </location>
    <ligand>
        <name>Ca(2+)</name>
        <dbReference type="ChEBI" id="CHEBI:29108"/>
        <label>2</label>
    </ligand>
</feature>
<feature type="binding site" evidence="2">
    <location>
        <position position="138"/>
    </location>
    <ligand>
        <name>Ca(2+)</name>
        <dbReference type="ChEBI" id="CHEBI:29108"/>
        <label>2</label>
    </ligand>
</feature>
<feature type="binding site" evidence="2">
    <location>
        <position position="143"/>
    </location>
    <ligand>
        <name>Ca(2+)</name>
        <dbReference type="ChEBI" id="CHEBI:29108"/>
        <label>2</label>
    </ligand>
</feature>
<feature type="modified residue" description="N-acetylmethionine" evidence="1">
    <location>
        <position position="1"/>
    </location>
</feature>